<geneLocation type="chloroplast"/>
<proteinExistence type="inferred from homology"/>
<feature type="chain" id="PRO_0000277138" description="Photosystem I P700 chlorophyll a apoprotein A2">
    <location>
        <begin position="1"/>
        <end position="734"/>
    </location>
</feature>
<feature type="transmembrane region" description="Helical; Name=I" evidence="1">
    <location>
        <begin position="46"/>
        <end position="69"/>
    </location>
</feature>
<feature type="transmembrane region" description="Helical; Name=II" evidence="1">
    <location>
        <begin position="135"/>
        <end position="158"/>
    </location>
</feature>
<feature type="transmembrane region" description="Helical; Name=III" evidence="1">
    <location>
        <begin position="175"/>
        <end position="199"/>
    </location>
</feature>
<feature type="transmembrane region" description="Helical; Name=IV" evidence="1">
    <location>
        <begin position="273"/>
        <end position="291"/>
    </location>
</feature>
<feature type="transmembrane region" description="Helical; Name=V" evidence="1">
    <location>
        <begin position="330"/>
        <end position="353"/>
    </location>
</feature>
<feature type="transmembrane region" description="Helical; Name=VI" evidence="1">
    <location>
        <begin position="369"/>
        <end position="395"/>
    </location>
</feature>
<feature type="transmembrane region" description="Helical; Name=VII" evidence="1">
    <location>
        <begin position="417"/>
        <end position="439"/>
    </location>
</feature>
<feature type="transmembrane region" description="Helical; Name=VIII" evidence="1">
    <location>
        <begin position="517"/>
        <end position="535"/>
    </location>
</feature>
<feature type="transmembrane region" description="Helical; Name=IX" evidence="1">
    <location>
        <begin position="575"/>
        <end position="596"/>
    </location>
</feature>
<feature type="transmembrane region" description="Helical; Name=X" evidence="1">
    <location>
        <begin position="643"/>
        <end position="665"/>
    </location>
</feature>
<feature type="transmembrane region" description="Helical; Name=XI" evidence="1">
    <location>
        <begin position="707"/>
        <end position="727"/>
    </location>
</feature>
<feature type="binding site" evidence="1">
    <location>
        <position position="559"/>
    </location>
    <ligand>
        <name>[4Fe-4S] cluster</name>
        <dbReference type="ChEBI" id="CHEBI:49883"/>
        <note>ligand shared between dimeric partners</note>
    </ligand>
</feature>
<feature type="binding site" evidence="1">
    <location>
        <position position="568"/>
    </location>
    <ligand>
        <name>[4Fe-4S] cluster</name>
        <dbReference type="ChEBI" id="CHEBI:49883"/>
        <note>ligand shared between dimeric partners</note>
    </ligand>
</feature>
<feature type="binding site" description="axial binding residue" evidence="1">
    <location>
        <position position="654"/>
    </location>
    <ligand>
        <name>chlorophyll a</name>
        <dbReference type="ChEBI" id="CHEBI:58416"/>
        <label>B1</label>
    </ligand>
    <ligandPart>
        <name>Mg</name>
        <dbReference type="ChEBI" id="CHEBI:25107"/>
    </ligandPart>
</feature>
<feature type="binding site" description="axial binding residue" evidence="1">
    <location>
        <position position="662"/>
    </location>
    <ligand>
        <name>chlorophyll a</name>
        <dbReference type="ChEBI" id="CHEBI:58416"/>
        <label>B3</label>
    </ligand>
    <ligandPart>
        <name>Mg</name>
        <dbReference type="ChEBI" id="CHEBI:25107"/>
    </ligandPart>
</feature>
<feature type="binding site" evidence="1">
    <location>
        <position position="670"/>
    </location>
    <ligand>
        <name>chlorophyll a</name>
        <dbReference type="ChEBI" id="CHEBI:58416"/>
        <label>B3</label>
    </ligand>
</feature>
<feature type="binding site" evidence="1">
    <location>
        <position position="671"/>
    </location>
    <ligand>
        <name>phylloquinone</name>
        <dbReference type="ChEBI" id="CHEBI:18067"/>
        <label>B</label>
    </ligand>
</feature>
<name>PSAB_VITVI</name>
<gene>
    <name evidence="1" type="primary">psaB</name>
</gene>
<reference key="1">
    <citation type="journal article" date="2006" name="BMC Evol. Biol.">
        <title>Phylogenetic analyses of Vitis (Vitaceae) based on complete chloroplast genome sequences: effects of taxon sampling and phylogenetic methods on resolving relationships among rosids.</title>
        <authorList>
            <person name="Jansen R.K."/>
            <person name="Kaittanis C."/>
            <person name="Lee S.-B."/>
            <person name="Saski C."/>
            <person name="Tomkins J."/>
            <person name="Alverson A.J."/>
            <person name="Daniell H."/>
        </authorList>
    </citation>
    <scope>NUCLEOTIDE SEQUENCE [LARGE SCALE GENOMIC DNA]</scope>
    <source>
        <strain>cv. Maxxa</strain>
    </source>
</reference>
<keyword id="KW-0004">4Fe-4S</keyword>
<keyword id="KW-0148">Chlorophyll</keyword>
<keyword id="KW-0150">Chloroplast</keyword>
<keyword id="KW-0157">Chromophore</keyword>
<keyword id="KW-0249">Electron transport</keyword>
<keyword id="KW-0408">Iron</keyword>
<keyword id="KW-0411">Iron-sulfur</keyword>
<keyword id="KW-0460">Magnesium</keyword>
<keyword id="KW-0472">Membrane</keyword>
<keyword id="KW-0479">Metal-binding</keyword>
<keyword id="KW-0560">Oxidoreductase</keyword>
<keyword id="KW-0602">Photosynthesis</keyword>
<keyword id="KW-0603">Photosystem I</keyword>
<keyword id="KW-0934">Plastid</keyword>
<keyword id="KW-1185">Reference proteome</keyword>
<keyword id="KW-0793">Thylakoid</keyword>
<keyword id="KW-0812">Transmembrane</keyword>
<keyword id="KW-1133">Transmembrane helix</keyword>
<keyword id="KW-0813">Transport</keyword>
<protein>
    <recommendedName>
        <fullName evidence="1">Photosystem I P700 chlorophyll a apoprotein A2</fullName>
        <ecNumber evidence="1">1.97.1.12</ecNumber>
    </recommendedName>
    <alternativeName>
        <fullName evidence="1">PSI-B</fullName>
    </alternativeName>
    <alternativeName>
        <fullName evidence="1">PsaB</fullName>
    </alternativeName>
</protein>
<sequence>MALRFPRFSQGLAQDPTTRRIWFGIATAHDFESHDDITEERLYQNIFASHFGQLAIIFLWTSGNLFHVAWQGNFESWVQDPLHVRPIAHAIWDPHFGQPAVEAFTRGGAPGPVNIAYSGVYQWWYTIGLRTNEDLYTGALFLLFLSAISLIAGWLHLQPKWKPSVSWFKNAESRLNHHLSGLFGVSSLAWTGHLVHVAIPGSRGEYVRWNNFLDVLPHPQGLGPLFTGQWNLYAQNPDSSSHLFGTSQGAGTAILTLLGGFHPQTQSLWLTDIAHHHLAIAFIFLVAGHMYRTNFGIGHSMKDLLEAHIPPGGRLGRGHKGLYDTINNSIHFQLGLALASLGVITSLVAQHMYSLPAYAFIAQDFTTQAALYTHHQYIAGFIMTGAFAHGAIFFIRDYNPEQNEDNVLARMLDHKEAIISHLSWASLFLGFHTLGLYVHNDVMLAFGTPEKQILIEPIFAQWIQSAHGKTSYGFDVLLSSTTGPAFNAGRSIWLPGWLNAVNENSNSLFLTIGPGDFLVHHAIALGLHTTTLILVKGALDARGSKLMPDKKDFGYSFPCDGPGRGGTCDISAWDAFYLAVFWMLNTIGWVTFYWHWKHITLWQGNVSQFNESSTYLMGWLRDYLWLNSSQLINGYNPFGMNSLSVWAWMFLFGHLVWATGFMFLISWRGYWQELIETLAWAHERTPLANLIRWRDKPVALSIVQARLVGLAHFSVGYIFTYAAFLIASTSGKFG</sequence>
<dbReference type="EC" id="1.97.1.12" evidence="1"/>
<dbReference type="EMBL" id="DQ424856">
    <property type="protein sequence ID" value="ABE47533.1"/>
    <property type="molecule type" value="Genomic_DNA"/>
</dbReference>
<dbReference type="RefSeq" id="YP_567075.1">
    <property type="nucleotide sequence ID" value="NC_007957.1"/>
</dbReference>
<dbReference type="SMR" id="Q0ZJ21"/>
<dbReference type="FunCoup" id="Q0ZJ21">
    <property type="interactions" value="286"/>
</dbReference>
<dbReference type="STRING" id="29760.Q0ZJ21"/>
<dbReference type="PaxDb" id="29760-VIT_18s0001g08620.t01"/>
<dbReference type="GeneID" id="4025090"/>
<dbReference type="KEGG" id="vvi:4025090"/>
<dbReference type="InParanoid" id="Q0ZJ21"/>
<dbReference type="OrthoDB" id="927100at71240"/>
<dbReference type="Proteomes" id="UP000009183">
    <property type="component" value="Chloroplast"/>
</dbReference>
<dbReference type="ExpressionAtlas" id="Q0ZJ21">
    <property type="expression patterns" value="baseline and differential"/>
</dbReference>
<dbReference type="GO" id="GO:0009535">
    <property type="term" value="C:chloroplast thylakoid membrane"/>
    <property type="evidence" value="ECO:0007669"/>
    <property type="project" value="UniProtKB-SubCell"/>
</dbReference>
<dbReference type="GO" id="GO:0009522">
    <property type="term" value="C:photosystem I"/>
    <property type="evidence" value="ECO:0007669"/>
    <property type="project" value="UniProtKB-KW"/>
</dbReference>
<dbReference type="GO" id="GO:0051539">
    <property type="term" value="F:4 iron, 4 sulfur cluster binding"/>
    <property type="evidence" value="ECO:0007669"/>
    <property type="project" value="UniProtKB-KW"/>
</dbReference>
<dbReference type="GO" id="GO:0016168">
    <property type="term" value="F:chlorophyll binding"/>
    <property type="evidence" value="ECO:0007669"/>
    <property type="project" value="UniProtKB-KW"/>
</dbReference>
<dbReference type="GO" id="GO:0009055">
    <property type="term" value="F:electron transfer activity"/>
    <property type="evidence" value="ECO:0007669"/>
    <property type="project" value="UniProtKB-UniRule"/>
</dbReference>
<dbReference type="GO" id="GO:0000287">
    <property type="term" value="F:magnesium ion binding"/>
    <property type="evidence" value="ECO:0007669"/>
    <property type="project" value="UniProtKB-UniRule"/>
</dbReference>
<dbReference type="GO" id="GO:0016491">
    <property type="term" value="F:oxidoreductase activity"/>
    <property type="evidence" value="ECO:0007669"/>
    <property type="project" value="UniProtKB-KW"/>
</dbReference>
<dbReference type="GO" id="GO:0015979">
    <property type="term" value="P:photosynthesis"/>
    <property type="evidence" value="ECO:0007669"/>
    <property type="project" value="UniProtKB-UniRule"/>
</dbReference>
<dbReference type="FunFam" id="1.20.1130.10:FF:000001">
    <property type="entry name" value="Photosystem I P700 chlorophyll a apoprotein A2"/>
    <property type="match status" value="1"/>
</dbReference>
<dbReference type="Gene3D" id="1.20.1130.10">
    <property type="entry name" value="Photosystem I PsaA/PsaB"/>
    <property type="match status" value="1"/>
</dbReference>
<dbReference type="HAMAP" id="MF_00482">
    <property type="entry name" value="PSI_PsaB"/>
    <property type="match status" value="1"/>
</dbReference>
<dbReference type="InterPro" id="IPR001280">
    <property type="entry name" value="PSI_PsaA/B"/>
</dbReference>
<dbReference type="InterPro" id="IPR020586">
    <property type="entry name" value="PSI_PsaA/B_CS"/>
</dbReference>
<dbReference type="InterPro" id="IPR036408">
    <property type="entry name" value="PSI_PsaA/B_sf"/>
</dbReference>
<dbReference type="InterPro" id="IPR006244">
    <property type="entry name" value="PSI_PsaB"/>
</dbReference>
<dbReference type="NCBIfam" id="TIGR01336">
    <property type="entry name" value="psaB"/>
    <property type="match status" value="1"/>
</dbReference>
<dbReference type="PANTHER" id="PTHR30128">
    <property type="entry name" value="OUTER MEMBRANE PROTEIN, OMPA-RELATED"/>
    <property type="match status" value="1"/>
</dbReference>
<dbReference type="PANTHER" id="PTHR30128:SF19">
    <property type="entry name" value="PHOTOSYSTEM I P700 CHLOROPHYLL A APOPROTEIN A1-RELATED"/>
    <property type="match status" value="1"/>
</dbReference>
<dbReference type="Pfam" id="PF00223">
    <property type="entry name" value="PsaA_PsaB"/>
    <property type="match status" value="1"/>
</dbReference>
<dbReference type="PIRSF" id="PIRSF002905">
    <property type="entry name" value="PSI_A"/>
    <property type="match status" value="1"/>
</dbReference>
<dbReference type="PRINTS" id="PR00257">
    <property type="entry name" value="PHOTSYSPSAAB"/>
</dbReference>
<dbReference type="SUPFAM" id="SSF81558">
    <property type="entry name" value="Photosystem I subunits PsaA/PsaB"/>
    <property type="match status" value="1"/>
</dbReference>
<dbReference type="PROSITE" id="PS00419">
    <property type="entry name" value="PHOTOSYSTEM_I_PSAAB"/>
    <property type="match status" value="1"/>
</dbReference>
<accession>Q0ZJ21</accession>
<comment type="function">
    <text evidence="1">PsaA and PsaB bind P700, the primary electron donor of photosystem I (PSI), as well as the electron acceptors A0, A1 and FX. PSI is a plastocyanin-ferredoxin oxidoreductase, converting photonic excitation into a charge separation, which transfers an electron from the donor P700 chlorophyll pair to the spectroscopically characterized acceptors A0, A1, FX, FA and FB in turn. Oxidized P700 is reduced on the lumenal side of the thylakoid membrane by plastocyanin.</text>
</comment>
<comment type="catalytic activity">
    <reaction evidence="1">
        <text>reduced [plastocyanin] + hnu + oxidized [2Fe-2S]-[ferredoxin] = oxidized [plastocyanin] + reduced [2Fe-2S]-[ferredoxin]</text>
        <dbReference type="Rhea" id="RHEA:30407"/>
        <dbReference type="Rhea" id="RHEA-COMP:10000"/>
        <dbReference type="Rhea" id="RHEA-COMP:10001"/>
        <dbReference type="Rhea" id="RHEA-COMP:10039"/>
        <dbReference type="Rhea" id="RHEA-COMP:10040"/>
        <dbReference type="ChEBI" id="CHEBI:29036"/>
        <dbReference type="ChEBI" id="CHEBI:30212"/>
        <dbReference type="ChEBI" id="CHEBI:33737"/>
        <dbReference type="ChEBI" id="CHEBI:33738"/>
        <dbReference type="ChEBI" id="CHEBI:49552"/>
        <dbReference type="EC" id="1.97.1.12"/>
    </reaction>
</comment>
<comment type="cofactor">
    <text evidence="1">P700 is a chlorophyll a/chlorophyll a' dimer, A0 is one or more chlorophyll a, A1 is one or both phylloquinones and FX is a shared 4Fe-4S iron-sulfur center.</text>
</comment>
<comment type="subunit">
    <text evidence="1">The PsaA/B heterodimer binds the P700 chlorophyll special pair and subsequent electron acceptors. PSI consists of a core antenna complex that captures photons, and an electron transfer chain that converts photonic excitation into a charge separation. The eukaryotic PSI reaction center is composed of at least 11 subunits.</text>
</comment>
<comment type="subcellular location">
    <subcellularLocation>
        <location>Plastid</location>
        <location>Chloroplast thylakoid membrane</location>
        <topology>Multi-pass membrane protein</topology>
    </subcellularLocation>
</comment>
<comment type="similarity">
    <text evidence="1">Belongs to the PsaA/PsaB family.</text>
</comment>
<organism>
    <name type="scientific">Vitis vinifera</name>
    <name type="common">Grape</name>
    <dbReference type="NCBI Taxonomy" id="29760"/>
    <lineage>
        <taxon>Eukaryota</taxon>
        <taxon>Viridiplantae</taxon>
        <taxon>Streptophyta</taxon>
        <taxon>Embryophyta</taxon>
        <taxon>Tracheophyta</taxon>
        <taxon>Spermatophyta</taxon>
        <taxon>Magnoliopsida</taxon>
        <taxon>eudicotyledons</taxon>
        <taxon>Gunneridae</taxon>
        <taxon>Pentapetalae</taxon>
        <taxon>rosids</taxon>
        <taxon>Vitales</taxon>
        <taxon>Vitaceae</taxon>
        <taxon>Viteae</taxon>
        <taxon>Vitis</taxon>
    </lineage>
</organism>
<evidence type="ECO:0000255" key="1">
    <source>
        <dbReference type="HAMAP-Rule" id="MF_00482"/>
    </source>
</evidence>